<reference key="1">
    <citation type="submission" date="2003-03" db="EMBL/GenBank/DDBJ databases">
        <title>The complete genome sequence of Neisseria gonorrhoeae.</title>
        <authorList>
            <person name="Lewis L.A."/>
            <person name="Gillaspy A.F."/>
            <person name="McLaughlin R.E."/>
            <person name="Gipson M."/>
            <person name="Ducey T.F."/>
            <person name="Ownbey T."/>
            <person name="Hartman K."/>
            <person name="Nydick C."/>
            <person name="Carson M.B."/>
            <person name="Vaughn J."/>
            <person name="Thomson C."/>
            <person name="Song L."/>
            <person name="Lin S."/>
            <person name="Yuan X."/>
            <person name="Najar F."/>
            <person name="Zhan M."/>
            <person name="Ren Q."/>
            <person name="Zhu H."/>
            <person name="Qi S."/>
            <person name="Kenton S.M."/>
            <person name="Lai H."/>
            <person name="White J.D."/>
            <person name="Clifton S."/>
            <person name="Roe B.A."/>
            <person name="Dyer D.W."/>
        </authorList>
    </citation>
    <scope>NUCLEOTIDE SEQUENCE [LARGE SCALE GENOMIC DNA]</scope>
    <source>
        <strain>ATCC 700825 / FA 1090</strain>
    </source>
</reference>
<name>QUEF_NEIG1</name>
<proteinExistence type="inferred from homology"/>
<organism>
    <name type="scientific">Neisseria gonorrhoeae (strain ATCC 700825 / FA 1090)</name>
    <dbReference type="NCBI Taxonomy" id="242231"/>
    <lineage>
        <taxon>Bacteria</taxon>
        <taxon>Pseudomonadati</taxon>
        <taxon>Pseudomonadota</taxon>
        <taxon>Betaproteobacteria</taxon>
        <taxon>Neisseriales</taxon>
        <taxon>Neisseriaceae</taxon>
        <taxon>Neisseria</taxon>
    </lineage>
</organism>
<sequence length="157" mass="17999">MSRNNEELQGISLLGNQKTQYPTGYAPEILEAFDNKHPDNDYFVKFVCPEFTSLCPMTGQPDFATIVIRYIPHIKMVESKSLKLYLFSFRNHGDFHEDCVNIIMKDLIALMDPKYIEVFGEFTPRGGIAVHPFANYGKAGTEFEALARKRLFEHDAQ</sequence>
<protein>
    <recommendedName>
        <fullName evidence="1">NADPH-dependent 7-cyano-7-deazaguanine reductase</fullName>
        <ecNumber evidence="1">1.7.1.13</ecNumber>
    </recommendedName>
    <alternativeName>
        <fullName evidence="1">7-cyano-7-carbaguanine reductase</fullName>
    </alternativeName>
    <alternativeName>
        <fullName evidence="1">NADPH-dependent nitrile oxidoreductase</fullName>
    </alternativeName>
    <alternativeName>
        <fullName evidence="1">PreQ(0) reductase</fullName>
    </alternativeName>
</protein>
<dbReference type="EC" id="1.7.1.13" evidence="1"/>
<dbReference type="EMBL" id="AE004969">
    <property type="protein sequence ID" value="AAW90309.1"/>
    <property type="molecule type" value="Genomic_DNA"/>
</dbReference>
<dbReference type="RefSeq" id="WP_003689837.1">
    <property type="nucleotide sequence ID" value="NC_002946.2"/>
</dbReference>
<dbReference type="RefSeq" id="YP_208721.1">
    <property type="nucleotide sequence ID" value="NC_002946.2"/>
</dbReference>
<dbReference type="SMR" id="Q5F678"/>
<dbReference type="STRING" id="242231.NGO_1684"/>
<dbReference type="GeneID" id="66753965"/>
<dbReference type="KEGG" id="ngo:NGO_1684"/>
<dbReference type="PATRIC" id="fig|242231.10.peg.2007"/>
<dbReference type="HOGENOM" id="CLU_102489_0_1_4"/>
<dbReference type="UniPathway" id="UPA00392"/>
<dbReference type="Proteomes" id="UP000000535">
    <property type="component" value="Chromosome"/>
</dbReference>
<dbReference type="GO" id="GO:0005737">
    <property type="term" value="C:cytoplasm"/>
    <property type="evidence" value="ECO:0007669"/>
    <property type="project" value="UniProtKB-SubCell"/>
</dbReference>
<dbReference type="GO" id="GO:0033739">
    <property type="term" value="F:preQ1 synthase activity"/>
    <property type="evidence" value="ECO:0007669"/>
    <property type="project" value="UniProtKB-UniRule"/>
</dbReference>
<dbReference type="GO" id="GO:0008616">
    <property type="term" value="P:queuosine biosynthetic process"/>
    <property type="evidence" value="ECO:0007669"/>
    <property type="project" value="UniProtKB-UniRule"/>
</dbReference>
<dbReference type="GO" id="GO:0006400">
    <property type="term" value="P:tRNA modification"/>
    <property type="evidence" value="ECO:0007669"/>
    <property type="project" value="UniProtKB-UniRule"/>
</dbReference>
<dbReference type="Gene3D" id="3.30.1130.10">
    <property type="match status" value="1"/>
</dbReference>
<dbReference type="HAMAP" id="MF_00818">
    <property type="entry name" value="QueF_type1"/>
    <property type="match status" value="1"/>
</dbReference>
<dbReference type="InterPro" id="IPR043133">
    <property type="entry name" value="GTP-CH-I_C/QueF"/>
</dbReference>
<dbReference type="InterPro" id="IPR050084">
    <property type="entry name" value="NADPH_dep_7-cyano-7-deazaG_red"/>
</dbReference>
<dbReference type="InterPro" id="IPR029500">
    <property type="entry name" value="QueF"/>
</dbReference>
<dbReference type="InterPro" id="IPR016856">
    <property type="entry name" value="QueF_type1"/>
</dbReference>
<dbReference type="NCBIfam" id="TIGR03139">
    <property type="entry name" value="QueF-II"/>
    <property type="match status" value="1"/>
</dbReference>
<dbReference type="PANTHER" id="PTHR34354">
    <property type="entry name" value="NADPH-DEPENDENT 7-CYANO-7-DEAZAGUANINE REDUCTASE"/>
    <property type="match status" value="1"/>
</dbReference>
<dbReference type="PANTHER" id="PTHR34354:SF1">
    <property type="entry name" value="NADPH-DEPENDENT 7-CYANO-7-DEAZAGUANINE REDUCTASE"/>
    <property type="match status" value="1"/>
</dbReference>
<dbReference type="Pfam" id="PF14489">
    <property type="entry name" value="QueF"/>
    <property type="match status" value="1"/>
</dbReference>
<dbReference type="PIRSF" id="PIRSF027377">
    <property type="entry name" value="Nitrile_oxidored_QueF"/>
    <property type="match status" value="1"/>
</dbReference>
<dbReference type="SUPFAM" id="SSF55620">
    <property type="entry name" value="Tetrahydrobiopterin biosynthesis enzymes-like"/>
    <property type="match status" value="1"/>
</dbReference>
<comment type="function">
    <text evidence="1">Catalyzes the NADPH-dependent reduction of 7-cyano-7-deazaguanine (preQ0) to 7-aminomethyl-7-deazaguanine (preQ1).</text>
</comment>
<comment type="catalytic activity">
    <reaction evidence="1">
        <text>7-aminomethyl-7-carbaguanine + 2 NADP(+) = 7-cyano-7-deazaguanine + 2 NADPH + 3 H(+)</text>
        <dbReference type="Rhea" id="RHEA:13409"/>
        <dbReference type="ChEBI" id="CHEBI:15378"/>
        <dbReference type="ChEBI" id="CHEBI:45075"/>
        <dbReference type="ChEBI" id="CHEBI:57783"/>
        <dbReference type="ChEBI" id="CHEBI:58349"/>
        <dbReference type="ChEBI" id="CHEBI:58703"/>
        <dbReference type="EC" id="1.7.1.13"/>
    </reaction>
</comment>
<comment type="pathway">
    <text evidence="1">tRNA modification; tRNA-queuosine biosynthesis.</text>
</comment>
<comment type="subcellular location">
    <subcellularLocation>
        <location evidence="1">Cytoplasm</location>
    </subcellularLocation>
</comment>
<comment type="similarity">
    <text evidence="1">Belongs to the GTP cyclohydrolase I family. QueF type 1 subfamily.</text>
</comment>
<feature type="chain" id="PRO_0000162980" description="NADPH-dependent 7-cyano-7-deazaguanine reductase">
    <location>
        <begin position="1"/>
        <end position="157"/>
    </location>
</feature>
<feature type="active site" description="Thioimide intermediate" evidence="1">
    <location>
        <position position="55"/>
    </location>
</feature>
<feature type="active site" description="Proton donor" evidence="1">
    <location>
        <position position="62"/>
    </location>
</feature>
<feature type="binding site" evidence="1">
    <location>
        <begin position="77"/>
        <end position="79"/>
    </location>
    <ligand>
        <name>substrate</name>
    </ligand>
</feature>
<feature type="binding site" evidence="1">
    <location>
        <begin position="96"/>
        <end position="97"/>
    </location>
    <ligand>
        <name>substrate</name>
    </ligand>
</feature>
<keyword id="KW-0963">Cytoplasm</keyword>
<keyword id="KW-0521">NADP</keyword>
<keyword id="KW-0560">Oxidoreductase</keyword>
<keyword id="KW-0671">Queuosine biosynthesis</keyword>
<keyword id="KW-1185">Reference proteome</keyword>
<evidence type="ECO:0000255" key="1">
    <source>
        <dbReference type="HAMAP-Rule" id="MF_00818"/>
    </source>
</evidence>
<accession>Q5F678</accession>
<gene>
    <name evidence="1" type="primary">queF</name>
    <name type="ordered locus">NGO_1684</name>
</gene>